<protein>
    <recommendedName>
        <fullName>FAD assembly factor SdhE</fullName>
    </recommendedName>
</protein>
<proteinExistence type="evidence at protein level"/>
<gene>
    <name type="primary">sdhE</name>
    <name type="ordered locus">VC_2471</name>
</gene>
<comment type="function">
    <text evidence="1">An FAD assembly protein, which accelerates covalent attachment of the cofactor into other proteins. Plays an essential role in the assembly of succinate dehydrogenase (SDH, respiratory complex II), an enzyme complex that is a component of both the tricarboxylic acid cycle and the electron transport chain, and which couples the oxidation of succinate to fumarate with the reduction of ubiquinone (coenzyme Q) to ubiquinol. Required for flavinylation (covalent attachment of FAD) of the flavoprotein subunit SdhA of SDH and other flavinylated proteins as well.</text>
</comment>
<comment type="subcellular location">
    <subcellularLocation>
        <location evidence="1">Cytoplasm</location>
    </subcellularLocation>
</comment>
<comment type="similarity">
    <text evidence="2">Belongs to the SdhE FAD assembly factor family.</text>
</comment>
<keyword id="KW-0002">3D-structure</keyword>
<keyword id="KW-0143">Chaperone</keyword>
<keyword id="KW-0963">Cytoplasm</keyword>
<keyword id="KW-1185">Reference proteome</keyword>
<dbReference type="EMBL" id="AE003852">
    <property type="protein sequence ID" value="AAF95613.1"/>
    <property type="molecule type" value="Genomic_DNA"/>
</dbReference>
<dbReference type="PIR" id="D82074">
    <property type="entry name" value="D82074"/>
</dbReference>
<dbReference type="RefSeq" id="NP_232100.1">
    <property type="nucleotide sequence ID" value="NC_002505.1"/>
</dbReference>
<dbReference type="RefSeq" id="WP_000287742.1">
    <property type="nucleotide sequence ID" value="NZ_LT906614.1"/>
</dbReference>
<dbReference type="PDB" id="2JR5">
    <property type="method" value="NMR"/>
    <property type="chains" value="A=1-86"/>
</dbReference>
<dbReference type="PDBsum" id="2JR5"/>
<dbReference type="BMRB" id="Q9KPA2"/>
<dbReference type="SMR" id="Q9KPA2"/>
<dbReference type="STRING" id="243277.VC_2471"/>
<dbReference type="DNASU" id="2613013"/>
<dbReference type="EnsemblBacteria" id="AAF95613">
    <property type="protein sequence ID" value="AAF95613"/>
    <property type="gene ID" value="VC_2471"/>
</dbReference>
<dbReference type="KEGG" id="vch:VC_2471"/>
<dbReference type="PATRIC" id="fig|243277.26.peg.2355"/>
<dbReference type="eggNOG" id="COG2938">
    <property type="taxonomic scope" value="Bacteria"/>
</dbReference>
<dbReference type="HOGENOM" id="CLU_103054_2_2_6"/>
<dbReference type="EvolutionaryTrace" id="Q9KPA2"/>
<dbReference type="Proteomes" id="UP000000584">
    <property type="component" value="Chromosome 1"/>
</dbReference>
<dbReference type="GO" id="GO:0005737">
    <property type="term" value="C:cytoplasm"/>
    <property type="evidence" value="ECO:0007669"/>
    <property type="project" value="UniProtKB-SubCell"/>
</dbReference>
<dbReference type="GO" id="GO:0006105">
    <property type="term" value="P:succinate metabolic process"/>
    <property type="evidence" value="ECO:0000318"/>
    <property type="project" value="GO_Central"/>
</dbReference>
<dbReference type="FunFam" id="1.10.150.250:FF:000001">
    <property type="entry name" value="FAD assembly factor SdhE"/>
    <property type="match status" value="1"/>
</dbReference>
<dbReference type="Gene3D" id="1.10.150.250">
    <property type="entry name" value="Flavinator of succinate dehydrogenase"/>
    <property type="match status" value="1"/>
</dbReference>
<dbReference type="InterPro" id="IPR005631">
    <property type="entry name" value="SDH"/>
</dbReference>
<dbReference type="InterPro" id="IPR036714">
    <property type="entry name" value="SDH_sf"/>
</dbReference>
<dbReference type="InterPro" id="IPR050531">
    <property type="entry name" value="SdhE_FAD_assembly_factor"/>
</dbReference>
<dbReference type="PANTHER" id="PTHR39585">
    <property type="entry name" value="FAD ASSEMBLY FACTOR SDHE"/>
    <property type="match status" value="1"/>
</dbReference>
<dbReference type="PANTHER" id="PTHR39585:SF1">
    <property type="entry name" value="FAD ASSEMBLY FACTOR SDHE"/>
    <property type="match status" value="1"/>
</dbReference>
<dbReference type="Pfam" id="PF03937">
    <property type="entry name" value="Sdh5"/>
    <property type="match status" value="1"/>
</dbReference>
<dbReference type="SUPFAM" id="SSF109910">
    <property type="entry name" value="YgfY-like"/>
    <property type="match status" value="1"/>
</dbReference>
<sequence>MYTAEQKARIKWACRRGMLELDVVIMPFFEECFDSLTESEQDDFVALLESDDPDLFAWVMGHGRCENLGLAAMVDKIVAHNLSKVR</sequence>
<name>SDHE_VIBCH</name>
<reference key="1">
    <citation type="journal article" date="2000" name="Nature">
        <title>DNA sequence of both chromosomes of the cholera pathogen Vibrio cholerae.</title>
        <authorList>
            <person name="Heidelberg J.F."/>
            <person name="Eisen J.A."/>
            <person name="Nelson W.C."/>
            <person name="Clayton R.A."/>
            <person name="Gwinn M.L."/>
            <person name="Dodson R.J."/>
            <person name="Haft D.H."/>
            <person name="Hickey E.K."/>
            <person name="Peterson J.D."/>
            <person name="Umayam L.A."/>
            <person name="Gill S.R."/>
            <person name="Nelson K.E."/>
            <person name="Read T.D."/>
            <person name="Tettelin H."/>
            <person name="Richardson D.L."/>
            <person name="Ermolaeva M.D."/>
            <person name="Vamathevan J.J."/>
            <person name="Bass S."/>
            <person name="Qin H."/>
            <person name="Dragoi I."/>
            <person name="Sellers P."/>
            <person name="McDonald L.A."/>
            <person name="Utterback T.R."/>
            <person name="Fleischmann R.D."/>
            <person name="Nierman W.C."/>
            <person name="White O."/>
            <person name="Salzberg S.L."/>
            <person name="Smith H.O."/>
            <person name="Colwell R.R."/>
            <person name="Mekalanos J.J."/>
            <person name="Venter J.C."/>
            <person name="Fraser C.M."/>
        </authorList>
    </citation>
    <scope>NUCLEOTIDE SEQUENCE [LARGE SCALE GENOMIC DNA]</scope>
    <source>
        <strain>ATCC 39315 / El Tor Inaba N16961</strain>
    </source>
</reference>
<reference key="2">
    <citation type="submission" date="2009-02" db="PDB data bank">
        <title>Solution structure of UPF0350 protein VC_2471.</title>
        <authorList>
            <consortium name="Northeast structural genomics consortium (NESG)"/>
        </authorList>
    </citation>
    <scope>STRUCTURE BY NMR</scope>
    <source>
        <strain>ATCC 39315 / El Tor Inaba N16961</strain>
    </source>
</reference>
<feature type="chain" id="PRO_0000214425" description="FAD assembly factor SdhE">
    <location>
        <begin position="1"/>
        <end position="86"/>
    </location>
</feature>
<feature type="helix" evidence="3">
    <location>
        <begin position="4"/>
        <end position="14"/>
    </location>
</feature>
<feature type="helix" evidence="3">
    <location>
        <begin position="19"/>
        <end position="23"/>
    </location>
</feature>
<feature type="turn" evidence="3">
    <location>
        <begin position="24"/>
        <end position="27"/>
    </location>
</feature>
<feature type="helix" evidence="3">
    <location>
        <begin position="28"/>
        <end position="32"/>
    </location>
</feature>
<feature type="turn" evidence="3">
    <location>
        <begin position="33"/>
        <end position="35"/>
    </location>
</feature>
<feature type="helix" evidence="3">
    <location>
        <begin position="38"/>
        <end position="48"/>
    </location>
</feature>
<feature type="helix" evidence="3">
    <location>
        <begin position="53"/>
        <end position="60"/>
    </location>
</feature>
<feature type="helix" evidence="3">
    <location>
        <begin position="68"/>
        <end position="86"/>
    </location>
</feature>
<organism>
    <name type="scientific">Vibrio cholerae serotype O1 (strain ATCC 39315 / El Tor Inaba N16961)</name>
    <dbReference type="NCBI Taxonomy" id="243277"/>
    <lineage>
        <taxon>Bacteria</taxon>
        <taxon>Pseudomonadati</taxon>
        <taxon>Pseudomonadota</taxon>
        <taxon>Gammaproteobacteria</taxon>
        <taxon>Vibrionales</taxon>
        <taxon>Vibrionaceae</taxon>
        <taxon>Vibrio</taxon>
    </lineage>
</organism>
<accession>Q9KPA2</accession>
<evidence type="ECO:0000250" key="1">
    <source>
        <dbReference type="UniProtKB" id="G4V4G2"/>
    </source>
</evidence>
<evidence type="ECO:0000305" key="2"/>
<evidence type="ECO:0007829" key="3">
    <source>
        <dbReference type="PDB" id="2JR5"/>
    </source>
</evidence>